<sequence length="527" mass="59352">MRRRRRRDGFYPAPDFRDREAEDMAGVFDIDLDQPEDAGSEDELEEGGQLNESMDHGGVGPYELGMEHCEKFEISETSVNRGPEKIRPECFELLRVLGKGGYGKVFQVRKVTGANTGKIFAMKVLKKAMIVRNAKDTAHTKAERNILEEVKHPFIVDLIYAFQTGGKLYLILEYLSGGELFMQLEREGIFMEDTACFYLAEISMALGHLHQKGIIYRDLKPENIMLNHQGHVKLTDFGLCKESIHDGTVTHTFCGTIEYMAPEILMRSGHNRAVDWWSLGALMYDMLTGAPPFTGENRKKTIDKILKCKLNLPPYLTQEARDLLKKLLKRNAASRLGAGPGDAGEVQAHPFFRHINWEELLARKVEPPFKPLLQSEEDVSQFDSKFTRQTPVDSPDDSALSESANQVFLGFTYVAPSVLESVKEKFSFEPKIRSPRRFIGSPRTPVSPVKFSPGDFWGRGASASTANPQTPVEYPMETSGIEQMDVTMSGEASAPLPIRQPNSGPYKKQAFPMISKRPEHLRMNLEL</sequence>
<proteinExistence type="evidence at transcript level"/>
<reference key="1">
    <citation type="submission" date="2003-09" db="EMBL/GenBank/DDBJ databases">
        <authorList>
            <person name="Arvisais E.W."/>
            <person name="Davis J.S."/>
        </authorList>
    </citation>
    <scope>NUCLEOTIDE SEQUENCE [MRNA]</scope>
</reference>
<protein>
    <recommendedName>
        <fullName>Ribosomal protein S6 kinase beta-1</fullName>
        <shortName>S6K-beta-1</shortName>
        <shortName>S6K1</shortName>
        <ecNumber evidence="2">2.7.11.1</ecNumber>
    </recommendedName>
    <alternativeName>
        <fullName>70 kDa ribosomal protein S6 kinase 1</fullName>
        <shortName>P70S6K1</shortName>
        <shortName>p70-S6K 1</shortName>
    </alternativeName>
</protein>
<gene>
    <name type="primary">RPS6KB1</name>
</gene>
<comment type="function">
    <text evidence="2 3 4">Serine/threonine-protein kinase that acts downstream of mTOR signaling in response to growth factors and nutrients to promote cell proliferation, cell growth and cell cycle progression. Regulates protein synthesis through phosphorylation of EIF4B, RPS6 and EEF2K, and contributes to cell survival by repressing the pro-apoptotic function of BAD. Under conditions of nutrient depletion, the inactive form associates with the EIF3 translation initiation complex. Upon mitogenic stimulation, phosphorylation by the mechanistic target of rapamycin complex 1 (mTORC1) leads to dissociation from the EIF3 complex and activation. The active form then phosphorylates and activates several substrates in the pre-initiation complex, including the EIF2B complex and the cap-binding complex component EIF4B. Also controls translation initiation by phosphorylating a negative regulator of EIF4A, PDCD4, targeting it for ubiquitination and subsequent proteolysis. Promotes initiation of the pioneer round of protein synthesis by phosphorylating POLDIP3/SKAR. In response to IGF1, activates translation elongation by phosphorylating EEF2 kinase (EEF2K), which leads to its inhibition and thus activation of EEF2. Also plays a role in feedback regulation of mTORC2 by mTORC1 by phosphorylating MAPKAP1/SIN1, MTOR and RICTOR, resulting in the inhibition of mTORC2 and AKT1 signaling. Also involved in feedback regulation of mTORC1 and mTORC2 by phosphorylating DEPTOR (By similarity). Mediates cell survival by phosphorylating the pro-apoptotic protein BAD and suppressing its pro-apoptotic function (By similarity). Phosphorylates mitochondrial URI1 leading to dissociation of a URI1-PPP1CC complex. The free mitochondrial PPP1CC can then dephosphorylate RPS6KB1 at Thr-412, which is proposed to be a negative feedback mechanism for the RPS6KB1 anti-apoptotic function. Mediates TNF-alpha-induced insulin resistance by phosphorylating IRS1 at multiple serine residues, resulting in accelerated degradation of IRS1. In cells lacking functional TSC1-2 complex, constitutively phosphorylates and inhibits GSK3B (By similarity). May be involved in cytoskeletal rearrangement through binding to neurabin (By similarity). Phosphorylates and activates the pyrimidine biosynthesis enzyme CAD, downstream of MTOR. Following activation by mTORC1, phosphorylates EPRS and thereby plays a key role in fatty acid uptake by adipocytes and also most probably in interferon-gamma-induced translation inhibition (By similarity).</text>
</comment>
<comment type="catalytic activity">
    <reaction evidence="2">
        <text>L-seryl-[protein] + ATP = O-phospho-L-seryl-[protein] + ADP + H(+)</text>
        <dbReference type="Rhea" id="RHEA:17989"/>
        <dbReference type="Rhea" id="RHEA-COMP:9863"/>
        <dbReference type="Rhea" id="RHEA-COMP:11604"/>
        <dbReference type="ChEBI" id="CHEBI:15378"/>
        <dbReference type="ChEBI" id="CHEBI:29999"/>
        <dbReference type="ChEBI" id="CHEBI:30616"/>
        <dbReference type="ChEBI" id="CHEBI:83421"/>
        <dbReference type="ChEBI" id="CHEBI:456216"/>
        <dbReference type="EC" id="2.7.11.1"/>
    </reaction>
</comment>
<comment type="catalytic activity">
    <reaction evidence="2">
        <text>L-threonyl-[protein] + ATP = O-phospho-L-threonyl-[protein] + ADP + H(+)</text>
        <dbReference type="Rhea" id="RHEA:46608"/>
        <dbReference type="Rhea" id="RHEA-COMP:11060"/>
        <dbReference type="Rhea" id="RHEA-COMP:11605"/>
        <dbReference type="ChEBI" id="CHEBI:15378"/>
        <dbReference type="ChEBI" id="CHEBI:30013"/>
        <dbReference type="ChEBI" id="CHEBI:30616"/>
        <dbReference type="ChEBI" id="CHEBI:61977"/>
        <dbReference type="ChEBI" id="CHEBI:456216"/>
        <dbReference type="EC" id="2.7.11.1"/>
    </reaction>
</comment>
<comment type="activity regulation">
    <text evidence="1">Inactivated by binding to URI1. Activation requires multiple phosphorylation events on serine/threonine residues. Activation appears to be first mediated by phosphorylation of multiple sites in the autoinhibitory domain, which facilitates phosphorylation at Thr-412, disrupting the autoinhibitory mechanism and allowing phosphorylation of Thr-252 by PDPK1. The active conformation of the kinase is believed to be stabilized by a mechanism involving three conserved phosphorylation sites located in the kinase domain activation loop (Thr-252) and in the AGC-kinase C-terminal domain (Ser-394 in the middle of the tail/linker region and Thr-412 within a hydrophobic motif at its end). Activated by mTORC1; isoform Alpha I and isoform Alpha II are sensitive to rapamycin, which inhibits activating phosphorylation at Thr-412. Activated by PDPK1 (By similarity).</text>
</comment>
<comment type="subunit">
    <text evidence="2 3">Interacts with PPP1R9A/neurabin-1. Interacts with RPTOR. Interacts with IRS1. Interacts with EIF3B and EIF3C. Interacts with TRAF4. Interacts with POLDIP3. Interacts (via N-terminus) with IER5.</text>
</comment>
<comment type="subcellular location">
    <subcellularLocation>
        <location evidence="1">Cytoplasm</location>
    </subcellularLocation>
    <subcellularLocation>
        <location evidence="1">Synapse</location>
        <location evidence="1">Synaptosome</location>
    </subcellularLocation>
    <subcellularLocation>
        <location evidence="1">Mitochondrion outer membrane</location>
    </subcellularLocation>
    <subcellularLocation>
        <location evidence="1">Mitochondrion</location>
    </subcellularLocation>
    <text evidence="1">Colocalizes with URI1 at mitochondrion.</text>
</comment>
<comment type="domain">
    <text evidence="1">The autoinhibitory domain is believed to block phosphorylation within the AGC-kinase C-terminal domain and the activation loop.</text>
</comment>
<comment type="domain">
    <text evidence="1">The TOS (TOR signaling) motif is essential for activation by mTORC1.</text>
</comment>
<comment type="PTM">
    <text evidence="1">Phosphorylation at Thr-412 is regulated by mTORC1. The phosphorylation at this site is maintained by an agonist-dependent autophosphorylation mechanism. Activated by phosphorylation at Thr-252 by PDPK1. Dephosphorylation by PPP1CC at Thr-412 in mitochondrion (By similarity).</text>
</comment>
<comment type="similarity">
    <text evidence="9">Belongs to the protein kinase superfamily. AGC Ser/Thr protein kinase family. S6 kinase subfamily.</text>
</comment>
<keyword id="KW-0007">Acetylation</keyword>
<keyword id="KW-0053">Apoptosis</keyword>
<keyword id="KW-0067">ATP-binding</keyword>
<keyword id="KW-0131">Cell cycle</keyword>
<keyword id="KW-0963">Cytoplasm</keyword>
<keyword id="KW-0418">Kinase</keyword>
<keyword id="KW-0472">Membrane</keyword>
<keyword id="KW-0496">Mitochondrion</keyword>
<keyword id="KW-1000">Mitochondrion outer membrane</keyword>
<keyword id="KW-0547">Nucleotide-binding</keyword>
<keyword id="KW-0597">Phosphoprotein</keyword>
<keyword id="KW-1185">Reference proteome</keyword>
<keyword id="KW-0723">Serine/threonine-protein kinase</keyword>
<keyword id="KW-0770">Synapse</keyword>
<keyword id="KW-0771">Synaptosome</keyword>
<keyword id="KW-0808">Transferase</keyword>
<keyword id="KW-0810">Translation regulation</keyword>
<feature type="chain" id="PRO_0000248285" description="Ribosomal protein S6 kinase beta-1">
    <location>
        <begin position="1"/>
        <end position="527"/>
    </location>
</feature>
<feature type="domain" description="Protein kinase" evidence="5">
    <location>
        <begin position="91"/>
        <end position="352"/>
    </location>
</feature>
<feature type="domain" description="AGC-kinase C-terminal" evidence="6">
    <location>
        <begin position="353"/>
        <end position="423"/>
    </location>
</feature>
<feature type="region of interest" description="Disordered" evidence="8">
    <location>
        <begin position="1"/>
        <end position="54"/>
    </location>
</feature>
<feature type="region of interest" description="Autoinhibitory domain">
    <location>
        <begin position="424"/>
        <end position="527"/>
    </location>
</feature>
<feature type="short sequence motif" description="TOS motif">
    <location>
        <begin position="28"/>
        <end position="32"/>
    </location>
</feature>
<feature type="compositionally biased region" description="Acidic residues" evidence="8">
    <location>
        <begin position="30"/>
        <end position="46"/>
    </location>
</feature>
<feature type="active site" description="Proton acceptor" evidence="5 7">
    <location>
        <position position="218"/>
    </location>
</feature>
<feature type="binding site" evidence="5">
    <location>
        <begin position="97"/>
        <end position="105"/>
    </location>
    <ligand>
        <name>ATP</name>
        <dbReference type="ChEBI" id="CHEBI:30616"/>
    </ligand>
</feature>
<feature type="binding site" evidence="5">
    <location>
        <position position="123"/>
    </location>
    <ligand>
        <name>ATP</name>
        <dbReference type="ChEBI" id="CHEBI:30616"/>
    </ligand>
</feature>
<feature type="modified residue" description="Phosphothreonine; by PDPK1" evidence="2">
    <location>
        <position position="252"/>
    </location>
</feature>
<feature type="modified residue" description="Phosphoserine" evidence="2">
    <location>
        <position position="394"/>
    </location>
</feature>
<feature type="modified residue" description="Phosphothreonine; by MTOR, NEK6 and NEK7" evidence="3">
    <location>
        <position position="412"/>
    </location>
</feature>
<feature type="modified residue" description="Phosphoserine" evidence="3">
    <location>
        <position position="434"/>
    </location>
</feature>
<feature type="modified residue" description="Phosphoserine" evidence="2">
    <location>
        <position position="441"/>
    </location>
</feature>
<feature type="modified residue" description="Phosphothreonine" evidence="2">
    <location>
        <position position="444"/>
    </location>
</feature>
<feature type="modified residue" description="Phosphoserine" evidence="2">
    <location>
        <position position="447"/>
    </location>
</feature>
<feature type="modified residue" description="Phosphoserine" evidence="2">
    <location>
        <position position="452"/>
    </location>
</feature>
<feature type="modified residue" description="N6-acetyllysine" evidence="3">
    <location>
        <position position="516"/>
    </location>
</feature>
<organism>
    <name type="scientific">Bos taurus</name>
    <name type="common">Bovine</name>
    <dbReference type="NCBI Taxonomy" id="9913"/>
    <lineage>
        <taxon>Eukaryota</taxon>
        <taxon>Metazoa</taxon>
        <taxon>Chordata</taxon>
        <taxon>Craniata</taxon>
        <taxon>Vertebrata</taxon>
        <taxon>Euteleostomi</taxon>
        <taxon>Mammalia</taxon>
        <taxon>Eutheria</taxon>
        <taxon>Laurasiatheria</taxon>
        <taxon>Artiodactyla</taxon>
        <taxon>Ruminantia</taxon>
        <taxon>Pecora</taxon>
        <taxon>Bovidae</taxon>
        <taxon>Bovinae</taxon>
        <taxon>Bos</taxon>
    </lineage>
</organism>
<evidence type="ECO:0000250" key="1"/>
<evidence type="ECO:0000250" key="2">
    <source>
        <dbReference type="UniProtKB" id="P23443"/>
    </source>
</evidence>
<evidence type="ECO:0000250" key="3">
    <source>
        <dbReference type="UniProtKB" id="P67999"/>
    </source>
</evidence>
<evidence type="ECO:0000250" key="4">
    <source>
        <dbReference type="UniProtKB" id="Q8BSK8"/>
    </source>
</evidence>
<evidence type="ECO:0000255" key="5">
    <source>
        <dbReference type="PROSITE-ProRule" id="PRU00159"/>
    </source>
</evidence>
<evidence type="ECO:0000255" key="6">
    <source>
        <dbReference type="PROSITE-ProRule" id="PRU00618"/>
    </source>
</evidence>
<evidence type="ECO:0000255" key="7">
    <source>
        <dbReference type="PROSITE-ProRule" id="PRU10027"/>
    </source>
</evidence>
<evidence type="ECO:0000256" key="8">
    <source>
        <dbReference type="SAM" id="MobiDB-lite"/>
    </source>
</evidence>
<evidence type="ECO:0000305" key="9"/>
<name>KS6B1_BOVIN</name>
<accession>Q6TJY3</accession>
<dbReference type="EC" id="2.7.11.1" evidence="2"/>
<dbReference type="EMBL" id="AY396564">
    <property type="protein sequence ID" value="AAR01025.1"/>
    <property type="molecule type" value="mRNA"/>
</dbReference>
<dbReference type="RefSeq" id="NP_991385.1">
    <property type="nucleotide sequence ID" value="NM_205816.1"/>
</dbReference>
<dbReference type="SMR" id="Q6TJY3"/>
<dbReference type="FunCoup" id="Q6TJY3">
    <property type="interactions" value="3174"/>
</dbReference>
<dbReference type="STRING" id="9913.ENSBTAP00000022415"/>
<dbReference type="PaxDb" id="9913-ENSBTAP00000022415"/>
<dbReference type="GeneID" id="404181"/>
<dbReference type="KEGG" id="bta:404181"/>
<dbReference type="CTD" id="6198"/>
<dbReference type="eggNOG" id="KOG0598">
    <property type="taxonomic scope" value="Eukaryota"/>
</dbReference>
<dbReference type="HOGENOM" id="CLU_000288_63_5_1"/>
<dbReference type="InParanoid" id="Q6TJY3"/>
<dbReference type="OrthoDB" id="63267at2759"/>
<dbReference type="Proteomes" id="UP000009136">
    <property type="component" value="Unplaced"/>
</dbReference>
<dbReference type="GO" id="GO:0005737">
    <property type="term" value="C:cytoplasm"/>
    <property type="evidence" value="ECO:0000318"/>
    <property type="project" value="GO_Central"/>
</dbReference>
<dbReference type="GO" id="GO:0005741">
    <property type="term" value="C:mitochondrial outer membrane"/>
    <property type="evidence" value="ECO:0007669"/>
    <property type="project" value="UniProtKB-SubCell"/>
</dbReference>
<dbReference type="GO" id="GO:0005739">
    <property type="term" value="C:mitochondrion"/>
    <property type="evidence" value="ECO:0000250"/>
    <property type="project" value="UniProtKB"/>
</dbReference>
<dbReference type="GO" id="GO:0043005">
    <property type="term" value="C:neuron projection"/>
    <property type="evidence" value="ECO:0007669"/>
    <property type="project" value="UniProtKB-KW"/>
</dbReference>
<dbReference type="GO" id="GO:0005654">
    <property type="term" value="C:nucleoplasm"/>
    <property type="evidence" value="ECO:0000318"/>
    <property type="project" value="GO_Central"/>
</dbReference>
<dbReference type="GO" id="GO:0045202">
    <property type="term" value="C:synapse"/>
    <property type="evidence" value="ECO:0007669"/>
    <property type="project" value="UniProtKB-SubCell"/>
</dbReference>
<dbReference type="GO" id="GO:0005524">
    <property type="term" value="F:ATP binding"/>
    <property type="evidence" value="ECO:0007669"/>
    <property type="project" value="UniProtKB-KW"/>
</dbReference>
<dbReference type="GO" id="GO:0004672">
    <property type="term" value="F:protein kinase activity"/>
    <property type="evidence" value="ECO:0000250"/>
    <property type="project" value="UniProtKB"/>
</dbReference>
<dbReference type="GO" id="GO:0106310">
    <property type="term" value="F:protein serine kinase activity"/>
    <property type="evidence" value="ECO:0007669"/>
    <property type="project" value="RHEA"/>
</dbReference>
<dbReference type="GO" id="GO:0004674">
    <property type="term" value="F:protein serine/threonine kinase activity"/>
    <property type="evidence" value="ECO:0000318"/>
    <property type="project" value="GO_Central"/>
</dbReference>
<dbReference type="GO" id="GO:0006915">
    <property type="term" value="P:apoptotic process"/>
    <property type="evidence" value="ECO:0007669"/>
    <property type="project" value="UniProtKB-KW"/>
</dbReference>
<dbReference type="GO" id="GO:0071363">
    <property type="term" value="P:cellular response to growth factor stimulus"/>
    <property type="evidence" value="ECO:0000250"/>
    <property type="project" value="UniProtKB"/>
</dbReference>
<dbReference type="GO" id="GO:0032869">
    <property type="term" value="P:cellular response to insulin stimulus"/>
    <property type="evidence" value="ECO:0000314"/>
    <property type="project" value="AgBase"/>
</dbReference>
<dbReference type="GO" id="GO:0044539">
    <property type="term" value="P:long-chain fatty acid import into cell"/>
    <property type="evidence" value="ECO:0000250"/>
    <property type="project" value="UniProtKB"/>
</dbReference>
<dbReference type="GO" id="GO:0043066">
    <property type="term" value="P:negative regulation of apoptotic process"/>
    <property type="evidence" value="ECO:0000250"/>
    <property type="project" value="UniProtKB"/>
</dbReference>
<dbReference type="GO" id="GO:1903940">
    <property type="term" value="P:negative regulation of TORC2 signaling"/>
    <property type="evidence" value="ECO:0000250"/>
    <property type="project" value="UniProtKB"/>
</dbReference>
<dbReference type="GO" id="GO:0018105">
    <property type="term" value="P:peptidyl-serine phosphorylation"/>
    <property type="evidence" value="ECO:0000250"/>
    <property type="project" value="UniProtKB"/>
</dbReference>
<dbReference type="GO" id="GO:0043491">
    <property type="term" value="P:phosphatidylinositol 3-kinase/protein kinase B signal transduction"/>
    <property type="evidence" value="ECO:0000314"/>
    <property type="project" value="AgBase"/>
</dbReference>
<dbReference type="GO" id="GO:0006417">
    <property type="term" value="P:regulation of translation"/>
    <property type="evidence" value="ECO:0007669"/>
    <property type="project" value="UniProtKB-KW"/>
</dbReference>
<dbReference type="GO" id="GO:0031929">
    <property type="term" value="P:TOR signaling"/>
    <property type="evidence" value="ECO:0000250"/>
    <property type="project" value="UniProtKB"/>
</dbReference>
<dbReference type="GO" id="GO:0038202">
    <property type="term" value="P:TORC1 signaling"/>
    <property type="evidence" value="ECO:0000318"/>
    <property type="project" value="GO_Central"/>
</dbReference>
<dbReference type="CDD" id="cd05584">
    <property type="entry name" value="STKc_p70S6K"/>
    <property type="match status" value="1"/>
</dbReference>
<dbReference type="FunFam" id="3.30.200.20:FF:001128">
    <property type="entry name" value="Non-specific serine/threonine protein kinase"/>
    <property type="match status" value="1"/>
</dbReference>
<dbReference type="FunFam" id="1.10.510.10:FF:000092">
    <property type="entry name" value="Ribosomal protein S6 kinase"/>
    <property type="match status" value="1"/>
</dbReference>
<dbReference type="FunFam" id="3.30.200.20:FF:000686">
    <property type="entry name" value="Ribosomal protein S6 kinase"/>
    <property type="match status" value="1"/>
</dbReference>
<dbReference type="Gene3D" id="3.30.200.20">
    <property type="entry name" value="Phosphorylase Kinase, domain 1"/>
    <property type="match status" value="1"/>
</dbReference>
<dbReference type="Gene3D" id="1.10.510.10">
    <property type="entry name" value="Transferase(Phosphotransferase) domain 1"/>
    <property type="match status" value="1"/>
</dbReference>
<dbReference type="InterPro" id="IPR000961">
    <property type="entry name" value="AGC-kinase_C"/>
</dbReference>
<dbReference type="InterPro" id="IPR011009">
    <property type="entry name" value="Kinase-like_dom_sf"/>
</dbReference>
<dbReference type="InterPro" id="IPR017892">
    <property type="entry name" value="Pkinase_C"/>
</dbReference>
<dbReference type="InterPro" id="IPR000719">
    <property type="entry name" value="Prot_kinase_dom"/>
</dbReference>
<dbReference type="InterPro" id="IPR017441">
    <property type="entry name" value="Protein_kinase_ATP_BS"/>
</dbReference>
<dbReference type="InterPro" id="IPR016238">
    <property type="entry name" value="Ribosomal_S6_kinase"/>
</dbReference>
<dbReference type="InterPro" id="IPR008271">
    <property type="entry name" value="Ser/Thr_kinase_AS"/>
</dbReference>
<dbReference type="PANTHER" id="PTHR24351">
    <property type="entry name" value="RIBOSOMAL PROTEIN S6 KINASE"/>
    <property type="match status" value="1"/>
</dbReference>
<dbReference type="Pfam" id="PF00069">
    <property type="entry name" value="Pkinase"/>
    <property type="match status" value="1"/>
</dbReference>
<dbReference type="Pfam" id="PF00433">
    <property type="entry name" value="Pkinase_C"/>
    <property type="match status" value="1"/>
</dbReference>
<dbReference type="PIRSF" id="PIRSF000605">
    <property type="entry name" value="Ribsml_S6_kin_1"/>
    <property type="match status" value="1"/>
</dbReference>
<dbReference type="SMART" id="SM00133">
    <property type="entry name" value="S_TK_X"/>
    <property type="match status" value="1"/>
</dbReference>
<dbReference type="SMART" id="SM00220">
    <property type="entry name" value="S_TKc"/>
    <property type="match status" value="1"/>
</dbReference>
<dbReference type="SUPFAM" id="SSF56112">
    <property type="entry name" value="Protein kinase-like (PK-like)"/>
    <property type="match status" value="1"/>
</dbReference>
<dbReference type="PROSITE" id="PS51285">
    <property type="entry name" value="AGC_KINASE_CTER"/>
    <property type="match status" value="1"/>
</dbReference>
<dbReference type="PROSITE" id="PS00107">
    <property type="entry name" value="PROTEIN_KINASE_ATP"/>
    <property type="match status" value="1"/>
</dbReference>
<dbReference type="PROSITE" id="PS50011">
    <property type="entry name" value="PROTEIN_KINASE_DOM"/>
    <property type="match status" value="1"/>
</dbReference>
<dbReference type="PROSITE" id="PS00108">
    <property type="entry name" value="PROTEIN_KINASE_ST"/>
    <property type="match status" value="1"/>
</dbReference>